<keyword id="KW-0175">Coiled coil</keyword>
<keyword id="KW-0968">Cytoplasmic vesicle</keyword>
<keyword id="KW-0472">Membrane</keyword>
<keyword id="KW-0496">Mitochondrion</keyword>
<keyword id="KW-1000">Mitochondrion outer membrane</keyword>
<keyword id="KW-0576">Peroxisome</keyword>
<keyword id="KW-1185">Reference proteome</keyword>
<keyword id="KW-0770">Synapse</keyword>
<keyword id="KW-0812">Transmembrane</keyword>
<keyword id="KW-1133">Transmembrane helix</keyword>
<feature type="chain" id="PRO_0000289190" description="Mitochondrial fission factor homolog A">
    <location>
        <begin position="1"/>
        <end position="219"/>
    </location>
</feature>
<feature type="topological domain" description="Cytoplasmic" evidence="4">
    <location>
        <begin position="1"/>
        <end position="199"/>
    </location>
</feature>
<feature type="transmembrane region" description="Helical; Anchor for type IV membrane protein" evidence="4">
    <location>
        <begin position="200"/>
        <end position="217"/>
    </location>
</feature>
<feature type="topological domain" description="Extracellular" evidence="4">
    <location>
        <begin position="218"/>
        <end position="219"/>
    </location>
</feature>
<feature type="coiled-coil region" evidence="4">
    <location>
        <begin position="164"/>
        <end position="194"/>
    </location>
</feature>
<sequence>MAEINRMQYEIDYTEGISQRMRVPEMLKVAPGNLGANLKAQQDMPIPGVVMEVPERIVVAGQSEESPFSRPSDLDFISGTNIGTLALKTPPRVLTLSERPLDFLDLEGLTPATPQSEEIRSSGHLKRDKFSSENALRQNGQLVRHDSMSAMSTLDTTLDATADDLALADAASLRRQIIKLNRRLLLLEEENKERVKHEMTMYSIIIIFGLLNSWLWLRR</sequence>
<proteinExistence type="evidence at transcript level"/>
<gene>
    <name type="primary">mff-a</name>
</gene>
<organism>
    <name type="scientific">Xenopus laevis</name>
    <name type="common">African clawed frog</name>
    <dbReference type="NCBI Taxonomy" id="8355"/>
    <lineage>
        <taxon>Eukaryota</taxon>
        <taxon>Metazoa</taxon>
        <taxon>Chordata</taxon>
        <taxon>Craniata</taxon>
        <taxon>Vertebrata</taxon>
        <taxon>Euteleostomi</taxon>
        <taxon>Amphibia</taxon>
        <taxon>Batrachia</taxon>
        <taxon>Anura</taxon>
        <taxon>Pipoidea</taxon>
        <taxon>Pipidae</taxon>
        <taxon>Xenopodinae</taxon>
        <taxon>Xenopus</taxon>
        <taxon>Xenopus</taxon>
    </lineage>
</organism>
<protein>
    <recommendedName>
        <fullName>Mitochondrial fission factor homolog A</fullName>
    </recommendedName>
</protein>
<name>MFF_XENLA</name>
<comment type="function">
    <text evidence="2 3">Plays a role in mitochondrial and peroxisomal fission. Promotes the recruitment and association of the fission mediator dynamin-related protein 1 (DNM1L) to the mitochondrial surface (By similarity).</text>
</comment>
<comment type="subcellular location">
    <subcellularLocation>
        <location evidence="2">Mitochondrion outer membrane</location>
        <topology evidence="4">Single-pass type IV membrane protein</topology>
    </subcellularLocation>
    <subcellularLocation>
        <location evidence="3">Peroxisome</location>
    </subcellularLocation>
    <subcellularLocation>
        <location evidence="1">Cytoplasmic vesicle</location>
        <location evidence="1">Secretory vesicle</location>
        <location evidence="1">Synaptic vesicle</location>
    </subcellularLocation>
</comment>
<comment type="similarity">
    <text evidence="5">Belongs to the Tango11 family.</text>
</comment>
<accession>Q6DD53</accession>
<evidence type="ECO:0000250" key="1">
    <source>
        <dbReference type="UniProtKB" id="Q4KM98"/>
    </source>
</evidence>
<evidence type="ECO:0000250" key="2">
    <source>
        <dbReference type="UniProtKB" id="Q6PCP5"/>
    </source>
</evidence>
<evidence type="ECO:0000250" key="3">
    <source>
        <dbReference type="UniProtKB" id="Q9GZY8"/>
    </source>
</evidence>
<evidence type="ECO:0000255" key="4"/>
<evidence type="ECO:0000305" key="5"/>
<dbReference type="EMBL" id="BC077775">
    <property type="protein sequence ID" value="AAH77775.1"/>
    <property type="molecule type" value="mRNA"/>
</dbReference>
<dbReference type="RefSeq" id="NP_001086925.1">
    <property type="nucleotide sequence ID" value="NM_001093456.1"/>
</dbReference>
<dbReference type="SMR" id="Q6DD53"/>
<dbReference type="DNASU" id="446760"/>
<dbReference type="AGR" id="Xenbase:XB-GENE-6255354"/>
<dbReference type="Xenbase" id="XB-GENE-6255354">
    <property type="gene designation" value="mff.S"/>
</dbReference>
<dbReference type="Proteomes" id="UP000186698">
    <property type="component" value="Unplaced"/>
</dbReference>
<dbReference type="Bgee" id="446760">
    <property type="expression patterns" value="Expressed in testis and 19 other cell types or tissues"/>
</dbReference>
<dbReference type="GO" id="GO:0005741">
    <property type="term" value="C:mitochondrial outer membrane"/>
    <property type="evidence" value="ECO:0000250"/>
    <property type="project" value="UniProtKB"/>
</dbReference>
<dbReference type="GO" id="GO:0005777">
    <property type="term" value="C:peroxisome"/>
    <property type="evidence" value="ECO:0000250"/>
    <property type="project" value="UniProtKB"/>
</dbReference>
<dbReference type="GO" id="GO:0008021">
    <property type="term" value="C:synaptic vesicle"/>
    <property type="evidence" value="ECO:0007669"/>
    <property type="project" value="UniProtKB-SubCell"/>
</dbReference>
<dbReference type="GO" id="GO:0042803">
    <property type="term" value="F:protein homodimerization activity"/>
    <property type="evidence" value="ECO:0000250"/>
    <property type="project" value="UniProtKB"/>
</dbReference>
<dbReference type="GO" id="GO:0000266">
    <property type="term" value="P:mitochondrial fission"/>
    <property type="evidence" value="ECO:0000250"/>
    <property type="project" value="UniProtKB"/>
</dbReference>
<dbReference type="GO" id="GO:0090141">
    <property type="term" value="P:positive regulation of mitochondrial fission"/>
    <property type="evidence" value="ECO:0000318"/>
    <property type="project" value="GO_Central"/>
</dbReference>
<dbReference type="GO" id="GO:0006626">
    <property type="term" value="P:protein targeting to mitochondrion"/>
    <property type="evidence" value="ECO:0000250"/>
    <property type="project" value="UniProtKB"/>
</dbReference>
<dbReference type="InterPro" id="IPR039433">
    <property type="entry name" value="Mff-like_dom"/>
</dbReference>
<dbReference type="InterPro" id="IPR008518">
    <property type="entry name" value="Mff/Tango-11"/>
</dbReference>
<dbReference type="PANTHER" id="PTHR16501:SF17">
    <property type="entry name" value="MITOCHONDRIAL FISSION FACTOR"/>
    <property type="match status" value="1"/>
</dbReference>
<dbReference type="PANTHER" id="PTHR16501">
    <property type="entry name" value="TRANSPORT AND GOLGI ORGANIZATION PROTEIN 11"/>
    <property type="match status" value="1"/>
</dbReference>
<dbReference type="Pfam" id="PF05644">
    <property type="entry name" value="Miff"/>
    <property type="match status" value="2"/>
</dbReference>
<reference key="1">
    <citation type="submission" date="2004-07" db="EMBL/GenBank/DDBJ databases">
        <authorList>
            <consortium name="NIH - Xenopus Gene Collection (XGC) project"/>
        </authorList>
    </citation>
    <scope>NUCLEOTIDE SEQUENCE [LARGE SCALE MRNA]</scope>
    <source>
        <tissue>Spleen</tissue>
    </source>
</reference>